<organism>
    <name type="scientific">Neurospora crassa (strain ATCC 24698 / 74-OR23-1A / CBS 708.71 / DSM 1257 / FGSC 987)</name>
    <dbReference type="NCBI Taxonomy" id="367110"/>
    <lineage>
        <taxon>Eukaryota</taxon>
        <taxon>Fungi</taxon>
        <taxon>Dikarya</taxon>
        <taxon>Ascomycota</taxon>
        <taxon>Pezizomycotina</taxon>
        <taxon>Sordariomycetes</taxon>
        <taxon>Sordariomycetidae</taxon>
        <taxon>Sordariales</taxon>
        <taxon>Sordariaceae</taxon>
        <taxon>Neurospora</taxon>
    </lineage>
</organism>
<gene>
    <name type="primary">gpe-1</name>
    <name type="synonym">kae1</name>
    <name type="ORF">NCU03836</name>
</gene>
<comment type="function">
    <text evidence="1">Component of the EKC/KEOPS complex that is required for the formation of a threonylcarbamoyl group on adenosine at position 37 (t(6)A37) in tRNAs that read codons beginning with adenine. The complex is probably involved in the transfer of the threonylcarbamoyl moiety of threonylcarbamoyl-AMP (TC-AMP) to the N6 group of A37. Kae1 likely plays a direct catalytic role in this reaction, but requires other protein(s) of the complex to fulfill this activity. The EKC/KEOPS complex also promotes both telomere uncapping and telomere elongation. The complex is required for efficient recruitment of transcriptional coactivators.</text>
</comment>
<comment type="catalytic activity">
    <reaction evidence="1">
        <text>L-threonylcarbamoyladenylate + adenosine(37) in tRNA = N(6)-L-threonylcarbamoyladenosine(37) in tRNA + AMP + H(+)</text>
        <dbReference type="Rhea" id="RHEA:37059"/>
        <dbReference type="Rhea" id="RHEA-COMP:10162"/>
        <dbReference type="Rhea" id="RHEA-COMP:10163"/>
        <dbReference type="ChEBI" id="CHEBI:15378"/>
        <dbReference type="ChEBI" id="CHEBI:73682"/>
        <dbReference type="ChEBI" id="CHEBI:74411"/>
        <dbReference type="ChEBI" id="CHEBI:74418"/>
        <dbReference type="ChEBI" id="CHEBI:456215"/>
        <dbReference type="EC" id="2.3.1.234"/>
    </reaction>
</comment>
<comment type="cofactor">
    <cofactor evidence="1">
        <name>a divalent metal cation</name>
        <dbReference type="ChEBI" id="CHEBI:60240"/>
    </cofactor>
    <text evidence="1">Binds 1 divalent metal cation per subunit.</text>
</comment>
<comment type="subunit">
    <text evidence="1">Component of the EKC/KEOPS complex composed of at least bud32, cgi121, gon7, kae1 and pcc1; the whole complex dimerizes.</text>
</comment>
<comment type="subcellular location">
    <subcellularLocation>
        <location evidence="1">Cytoplasm</location>
    </subcellularLocation>
    <subcellularLocation>
        <location evidence="1">Nucleus</location>
    </subcellularLocation>
</comment>
<comment type="similarity">
    <text evidence="1">Belongs to the KAE1 / TsaD family.</text>
</comment>
<dbReference type="EC" id="2.3.1.234" evidence="1"/>
<dbReference type="EMBL" id="CM002240">
    <property type="protein sequence ID" value="ESA42481.1"/>
    <property type="molecule type" value="Genomic_DNA"/>
</dbReference>
<dbReference type="EMBL" id="CM002240">
    <property type="protein sequence ID" value="ESA42482.1"/>
    <property type="molecule type" value="Genomic_DNA"/>
</dbReference>
<dbReference type="RefSeq" id="XP_011394606.1">
    <property type="nucleotide sequence ID" value="XM_011396304.1"/>
</dbReference>
<dbReference type="RefSeq" id="XP_011394607.1">
    <property type="nucleotide sequence ID" value="XM_011396305.1"/>
</dbReference>
<dbReference type="SMR" id="Q7S745"/>
<dbReference type="FunCoup" id="Q7S745">
    <property type="interactions" value="579"/>
</dbReference>
<dbReference type="STRING" id="367110.Q7S745"/>
<dbReference type="PaxDb" id="5141-EFNCRP00000003504"/>
<dbReference type="EnsemblFungi" id="ESA42481">
    <property type="protein sequence ID" value="ESA42481"/>
    <property type="gene ID" value="NCU03836"/>
</dbReference>
<dbReference type="EnsemblFungi" id="ESA42482">
    <property type="protein sequence ID" value="ESA42482"/>
    <property type="gene ID" value="NCU03836"/>
</dbReference>
<dbReference type="GeneID" id="3876742"/>
<dbReference type="KEGG" id="ncr:NCU03836"/>
<dbReference type="VEuPathDB" id="FungiDB:NCU03836"/>
<dbReference type="HOGENOM" id="CLU_023208_2_2_1"/>
<dbReference type="InParanoid" id="Q7S745"/>
<dbReference type="OMA" id="HHRSWVV"/>
<dbReference type="OrthoDB" id="10254073at2759"/>
<dbReference type="Proteomes" id="UP000001805">
    <property type="component" value="Chromosome 2, Linkage Group V"/>
</dbReference>
<dbReference type="GO" id="GO:0000785">
    <property type="term" value="C:chromatin"/>
    <property type="evidence" value="ECO:0007669"/>
    <property type="project" value="EnsemblFungi"/>
</dbReference>
<dbReference type="GO" id="GO:0005737">
    <property type="term" value="C:cytoplasm"/>
    <property type="evidence" value="ECO:0000318"/>
    <property type="project" value="GO_Central"/>
</dbReference>
<dbReference type="GO" id="GO:0000408">
    <property type="term" value="C:EKC/KEOPS complex"/>
    <property type="evidence" value="ECO:0000318"/>
    <property type="project" value="GO_Central"/>
</dbReference>
<dbReference type="GO" id="GO:0005634">
    <property type="term" value="C:nucleus"/>
    <property type="evidence" value="ECO:0007669"/>
    <property type="project" value="UniProtKB-SubCell"/>
</dbReference>
<dbReference type="GO" id="GO:0031490">
    <property type="term" value="F:chromatin DNA binding"/>
    <property type="evidence" value="ECO:0007669"/>
    <property type="project" value="EnsemblFungi"/>
</dbReference>
<dbReference type="GO" id="GO:0046872">
    <property type="term" value="F:metal ion binding"/>
    <property type="evidence" value="ECO:0007669"/>
    <property type="project" value="UniProtKB-KW"/>
</dbReference>
<dbReference type="GO" id="GO:0061711">
    <property type="term" value="F:N(6)-L-threonylcarbamoyladenine synthase activity"/>
    <property type="evidence" value="ECO:0007669"/>
    <property type="project" value="UniProtKB-EC"/>
</dbReference>
<dbReference type="GO" id="GO:0008252">
    <property type="term" value="F:nucleotidase activity"/>
    <property type="evidence" value="ECO:0007669"/>
    <property type="project" value="EnsemblFungi"/>
</dbReference>
<dbReference type="GO" id="GO:0045944">
    <property type="term" value="P:positive regulation of transcription by RNA polymerase II"/>
    <property type="evidence" value="ECO:0007669"/>
    <property type="project" value="EnsemblFungi"/>
</dbReference>
<dbReference type="GO" id="GO:0000722">
    <property type="term" value="P:telomere maintenance via recombination"/>
    <property type="evidence" value="ECO:0007669"/>
    <property type="project" value="EnsemblFungi"/>
</dbReference>
<dbReference type="GO" id="GO:0002949">
    <property type="term" value="P:tRNA threonylcarbamoyladenosine modification"/>
    <property type="evidence" value="ECO:0007669"/>
    <property type="project" value="UniProtKB-UniRule"/>
</dbReference>
<dbReference type="CDD" id="cd24132">
    <property type="entry name" value="ASKHA_NBD_OSGEP_like_euk"/>
    <property type="match status" value="1"/>
</dbReference>
<dbReference type="FunFam" id="3.30.420.40:FF:000038">
    <property type="entry name" value="Probable tRNA N6-adenosine threonylcarbamoyltransferase"/>
    <property type="match status" value="1"/>
</dbReference>
<dbReference type="Gene3D" id="3.30.420.40">
    <property type="match status" value="2"/>
</dbReference>
<dbReference type="HAMAP" id="MF_01446">
    <property type="entry name" value="Kae1"/>
    <property type="match status" value="1"/>
</dbReference>
<dbReference type="InterPro" id="IPR043129">
    <property type="entry name" value="ATPase_NBD"/>
</dbReference>
<dbReference type="InterPro" id="IPR000905">
    <property type="entry name" value="Gcp-like_dom"/>
</dbReference>
<dbReference type="InterPro" id="IPR017861">
    <property type="entry name" value="KAE1/TsaD"/>
</dbReference>
<dbReference type="InterPro" id="IPR034680">
    <property type="entry name" value="Kae1_archaea_euk"/>
</dbReference>
<dbReference type="NCBIfam" id="TIGR03722">
    <property type="entry name" value="arch_KAE1"/>
    <property type="match status" value="1"/>
</dbReference>
<dbReference type="NCBIfam" id="TIGR00329">
    <property type="entry name" value="gcp_kae1"/>
    <property type="match status" value="1"/>
</dbReference>
<dbReference type="PANTHER" id="PTHR11735">
    <property type="entry name" value="TRNA N6-ADENOSINE THREONYLCARBAMOYLTRANSFERASE"/>
    <property type="match status" value="1"/>
</dbReference>
<dbReference type="PANTHER" id="PTHR11735:SF14">
    <property type="entry name" value="TRNA N6-ADENOSINE THREONYLCARBAMOYLTRANSFERASE"/>
    <property type="match status" value="1"/>
</dbReference>
<dbReference type="Pfam" id="PF00814">
    <property type="entry name" value="TsaD"/>
    <property type="match status" value="1"/>
</dbReference>
<dbReference type="PRINTS" id="PR00789">
    <property type="entry name" value="OSIALOPTASE"/>
</dbReference>
<dbReference type="SUPFAM" id="SSF53067">
    <property type="entry name" value="Actin-like ATPase domain"/>
    <property type="match status" value="1"/>
</dbReference>
<feature type="chain" id="PRO_0000278939" description="tRNA N6-adenosine threonylcarbamoyltransferase">
    <location>
        <begin position="1"/>
        <end position="354"/>
    </location>
</feature>
<feature type="binding site" evidence="1">
    <location>
        <position position="121"/>
    </location>
    <ligand>
        <name>a divalent metal cation</name>
        <dbReference type="ChEBI" id="CHEBI:60240"/>
    </ligand>
</feature>
<feature type="binding site" evidence="1">
    <location>
        <position position="125"/>
    </location>
    <ligand>
        <name>a divalent metal cation</name>
        <dbReference type="ChEBI" id="CHEBI:60240"/>
    </ligand>
</feature>
<feature type="binding site" evidence="1">
    <location>
        <begin position="142"/>
        <end position="146"/>
    </location>
    <ligand>
        <name>substrate</name>
    </ligand>
</feature>
<feature type="binding site" evidence="1">
    <location>
        <position position="142"/>
    </location>
    <ligand>
        <name>a divalent metal cation</name>
        <dbReference type="ChEBI" id="CHEBI:60240"/>
    </ligand>
</feature>
<feature type="binding site" evidence="1">
    <location>
        <position position="174"/>
    </location>
    <ligand>
        <name>substrate</name>
    </ligand>
</feature>
<feature type="binding site" evidence="1">
    <location>
        <position position="189"/>
    </location>
    <ligand>
        <name>substrate</name>
    </ligand>
</feature>
<feature type="binding site" evidence="1">
    <location>
        <position position="193"/>
    </location>
    <ligand>
        <name>substrate</name>
    </ligand>
</feature>
<feature type="binding site" evidence="1">
    <location>
        <position position="285"/>
    </location>
    <ligand>
        <name>substrate</name>
    </ligand>
</feature>
<feature type="binding site" evidence="1">
    <location>
        <position position="313"/>
    </location>
    <ligand>
        <name>a divalent metal cation</name>
        <dbReference type="ChEBI" id="CHEBI:60240"/>
    </ligand>
</feature>
<proteinExistence type="inferred from homology"/>
<sequence length="354" mass="37802">MPDAKGRRIALGCEGSANKLGIGIIAHDPITGEALVLSNVRDTFVSPPGTGFLPKDTARHHRAYFVRVAKKALALSGVSISEIDCICYTKGPGMGGPLTSVAVGARTLALLWGKELVGVNHCVGHIEMGRAITGASNPVVLYVSGGNTQVIAYAEQRYRIFGETLDIAVGNCLDRFARTLEISNDPAPGYNIEQLAKQGGRVLLDLPYAVKGMDCSFSGILGRADDLAAQMKAGEPGPDGEPFTPADLCFSLQETVFAMLVEITERAMAHVGSNQVLIVGGVGCNERLQEMMGAMAAERGGSVYATDERFCIDNGIMIAHAGLLAYETGFRTPLDESTCTQRFRTDEVFVKWRD</sequence>
<keyword id="KW-0010">Activator</keyword>
<keyword id="KW-0012">Acyltransferase</keyword>
<keyword id="KW-0963">Cytoplasm</keyword>
<keyword id="KW-0479">Metal-binding</keyword>
<keyword id="KW-0539">Nucleus</keyword>
<keyword id="KW-1185">Reference proteome</keyword>
<keyword id="KW-0804">Transcription</keyword>
<keyword id="KW-0805">Transcription regulation</keyword>
<keyword id="KW-0808">Transferase</keyword>
<keyword id="KW-0819">tRNA processing</keyword>
<evidence type="ECO:0000255" key="1">
    <source>
        <dbReference type="HAMAP-Rule" id="MF_03180"/>
    </source>
</evidence>
<name>KAE1_NEUCR</name>
<accession>Q7S745</accession>
<accession>V5ILH1</accession>
<protein>
    <recommendedName>
        <fullName evidence="1">tRNA N6-adenosine threonylcarbamoyltransferase</fullName>
        <ecNumber evidence="1">2.3.1.234</ecNumber>
    </recommendedName>
    <alternativeName>
        <fullName>Glycoprotein endopeptidase 1</fullName>
    </alternativeName>
    <alternativeName>
        <fullName>N6-L-threonylcarbamoyladenine synthase</fullName>
        <shortName>t(6)A synthase</shortName>
    </alternativeName>
    <alternativeName>
        <fullName evidence="1">t(6)A37 threonylcarbamoyladenosine biosynthesis protein kae1</fullName>
    </alternativeName>
    <alternativeName>
        <fullName evidence="1">tRNA threonylcarbamoyladenosine biosynthesis protein kae1</fullName>
    </alternativeName>
</protein>
<reference key="1">
    <citation type="journal article" date="2003" name="Nature">
        <title>The genome sequence of the filamentous fungus Neurospora crassa.</title>
        <authorList>
            <person name="Galagan J.E."/>
            <person name="Calvo S.E."/>
            <person name="Borkovich K.A."/>
            <person name="Selker E.U."/>
            <person name="Read N.D."/>
            <person name="Jaffe D.B."/>
            <person name="FitzHugh W."/>
            <person name="Ma L.-J."/>
            <person name="Smirnov S."/>
            <person name="Purcell S."/>
            <person name="Rehman B."/>
            <person name="Elkins T."/>
            <person name="Engels R."/>
            <person name="Wang S."/>
            <person name="Nielsen C.B."/>
            <person name="Butler J."/>
            <person name="Endrizzi M."/>
            <person name="Qui D."/>
            <person name="Ianakiev P."/>
            <person name="Bell-Pedersen D."/>
            <person name="Nelson M.A."/>
            <person name="Werner-Washburne M."/>
            <person name="Selitrennikoff C.P."/>
            <person name="Kinsey J.A."/>
            <person name="Braun E.L."/>
            <person name="Zelter A."/>
            <person name="Schulte U."/>
            <person name="Kothe G.O."/>
            <person name="Jedd G."/>
            <person name="Mewes H.-W."/>
            <person name="Staben C."/>
            <person name="Marcotte E."/>
            <person name="Greenberg D."/>
            <person name="Roy A."/>
            <person name="Foley K."/>
            <person name="Naylor J."/>
            <person name="Stange-Thomann N."/>
            <person name="Barrett R."/>
            <person name="Gnerre S."/>
            <person name="Kamal M."/>
            <person name="Kamvysselis M."/>
            <person name="Mauceli E.W."/>
            <person name="Bielke C."/>
            <person name="Rudd S."/>
            <person name="Frishman D."/>
            <person name="Krystofova S."/>
            <person name="Rasmussen C."/>
            <person name="Metzenberg R.L."/>
            <person name="Perkins D.D."/>
            <person name="Kroken S."/>
            <person name="Cogoni C."/>
            <person name="Macino G."/>
            <person name="Catcheside D.E.A."/>
            <person name="Li W."/>
            <person name="Pratt R.J."/>
            <person name="Osmani S.A."/>
            <person name="DeSouza C.P.C."/>
            <person name="Glass N.L."/>
            <person name="Orbach M.J."/>
            <person name="Berglund J.A."/>
            <person name="Voelker R."/>
            <person name="Yarden O."/>
            <person name="Plamann M."/>
            <person name="Seiler S."/>
            <person name="Dunlap J.C."/>
            <person name="Radford A."/>
            <person name="Aramayo R."/>
            <person name="Natvig D.O."/>
            <person name="Alex L.A."/>
            <person name="Mannhaupt G."/>
            <person name="Ebbole D.J."/>
            <person name="Freitag M."/>
            <person name="Paulsen I."/>
            <person name="Sachs M.S."/>
            <person name="Lander E.S."/>
            <person name="Nusbaum C."/>
            <person name="Birren B.W."/>
        </authorList>
    </citation>
    <scope>NUCLEOTIDE SEQUENCE [LARGE SCALE GENOMIC DNA]</scope>
    <source>
        <strain>ATCC 24698 / 74-OR23-1A / CBS 708.71 / DSM 1257 / FGSC 987</strain>
    </source>
</reference>